<feature type="chain" id="PRO_0000432499" description="Lipid A 4'-phosphatase">
    <location>
        <begin position="1"/>
        <end position="236"/>
    </location>
</feature>
<feature type="transmembrane region" description="Helical; Name=1" evidence="2">
    <location>
        <begin position="26"/>
        <end position="46"/>
    </location>
</feature>
<feature type="transmembrane region" description="Helical; Name=2" evidence="2">
    <location>
        <begin position="58"/>
        <end position="78"/>
    </location>
</feature>
<feature type="transmembrane region" description="Helical; Name=3" evidence="2">
    <location>
        <begin position="134"/>
        <end position="153"/>
    </location>
</feature>
<feature type="transmembrane region" description="Helical; Name=4" evidence="2">
    <location>
        <begin position="160"/>
        <end position="182"/>
    </location>
</feature>
<feature type="transmembrane region" description="Helical; Name=5" evidence="2">
    <location>
        <begin position="200"/>
        <end position="220"/>
    </location>
</feature>
<reference key="1">
    <citation type="journal article" date="2008" name="DNA Res.">
        <title>Determination of the genome sequence of Porphyromonas gingivalis strain ATCC 33277 and genomic comparison with strain W83 revealed extensive genome rearrangements in P. gingivalis.</title>
        <authorList>
            <person name="Naito M."/>
            <person name="Hirakawa H."/>
            <person name="Yamashita A."/>
            <person name="Ohara N."/>
            <person name="Shoji M."/>
            <person name="Yukitake H."/>
            <person name="Nakayama K."/>
            <person name="Toh H."/>
            <person name="Yoshimura F."/>
            <person name="Kuhara S."/>
            <person name="Hattori M."/>
            <person name="Hayashi T."/>
            <person name="Nakayama K."/>
        </authorList>
    </citation>
    <scope>NUCLEOTIDE SEQUENCE [LARGE SCALE GENOMIC DNA]</scope>
    <source>
        <strain>ATCC 33277 / DSM 20709 / CIP 103683 / JCM 12257 / NCTC 11834 / 2561</strain>
    </source>
</reference>
<reference key="2">
    <citation type="journal article" date="2009" name="Cell. Microbiol.">
        <title>Human Toll-like receptor 4 responses to P. gingivalis are regulated by lipid A 1- and 4'-phosphatase activities.</title>
        <authorList>
            <person name="Coats S.R."/>
            <person name="Jones J.W."/>
            <person name="Do C.T."/>
            <person name="Braham P.H."/>
            <person name="Bainbridge B.W."/>
            <person name="To T.T."/>
            <person name="Goodlett D.R."/>
            <person name="Ernst R.K."/>
            <person name="Darveau R.P."/>
        </authorList>
    </citation>
    <scope>FUNCTION</scope>
    <scope>DISRUPTION PHENOTYPE</scope>
    <scope>LIPID A STRUCTURE</scope>
    <scope>ANTIBIOTIC RESISTANCE</scope>
    <source>
        <strain>ATCC 33277 / DSM 20709 / CIP 103683 / JCM 12257 / NCTC 11834 / 2561</strain>
    </source>
</reference>
<reference key="3">
    <citation type="journal article" date="2009" name="Int. J. Oral Sci.">
        <title>Porphyromonas gingivalis resistance to polymyxin B is determined by the lipid A 4'-phosphatase, PGN_0524.</title>
        <authorList>
            <person name="Coats S.R."/>
            <person name="To T.T."/>
            <person name="Jain S."/>
            <person name="Braham P.H."/>
            <person name="Darveau R.P."/>
        </authorList>
    </citation>
    <scope>FUNCTION</scope>
    <scope>DISRUPTION PHENOTYPE</scope>
    <scope>ANTIBIOTIC RESISTANCE</scope>
    <source>
        <strain>ATCC 33277 / DSM 20709 / CIP 103683 / JCM 12257 / NCTC 11834 / 2561</strain>
    </source>
</reference>
<reference key="4">
    <citation type="journal article" date="2014" name="Infect. Immun.">
        <title>Porphyromonas gingivalis lipid A phosphatase activity is critical for colonization and increasing the commensal load in the rabbit ligature model.</title>
        <authorList>
            <person name="Zenobia C."/>
            <person name="Hasturk H."/>
            <person name="Nguyen D."/>
            <person name="Van Dyke T.E."/>
            <person name="Kantarci A."/>
            <person name="Darveau R.P."/>
        </authorList>
    </citation>
    <scope>DISRUPTION PHENOTYPE</scope>
    <source>
        <strain>A7436</strain>
    </source>
</reference>
<protein>
    <recommendedName>
        <fullName evidence="6">Lipid A 4'-phosphatase</fullName>
        <ecNumber evidence="7">3.1.-.-</ecNumber>
    </recommendedName>
</protein>
<accession>B2RI48</accession>
<organism>
    <name type="scientific">Porphyromonas gingivalis (strain ATCC 33277 / DSM 20709 / CIP 103683 / JCM 12257 / NCTC 11834 / 2561)</name>
    <dbReference type="NCBI Taxonomy" id="431947"/>
    <lineage>
        <taxon>Bacteria</taxon>
        <taxon>Pseudomonadati</taxon>
        <taxon>Bacteroidota</taxon>
        <taxon>Bacteroidia</taxon>
        <taxon>Bacteroidales</taxon>
        <taxon>Porphyromonadaceae</taxon>
        <taxon>Porphyromonas</taxon>
    </lineage>
</organism>
<sequence length="236" mass="27362">MEYILEVERNLFLTLNGVQHPLLDGFFYLISAKWTWVIMSIAFLFFLFYKKPTKEALFIVGAVLLSVLICDQLSSSFFKPFFARFRPSHHPDFIDYVKTVYGYRGGKYGFISGHTTNYISLALFTSRIFRNKFYTWTIWSVVALVIYSRIYIGVHFITDIIPGIAVGLIVGHFVYKVYLYARSRWLGASCPAHPSAVYAGDSIRLWTLSLIGFVFAMLCMSRQLTEILQYYVFLLF</sequence>
<gene>
    <name evidence="7" type="primary">lpxF</name>
    <name evidence="6" type="synonym">PG1587</name>
    <name type="ordered locus">PGN_0524</name>
</gene>
<dbReference type="EC" id="3.1.-.-" evidence="7"/>
<dbReference type="EMBL" id="AP009380">
    <property type="protein sequence ID" value="BAG33043.1"/>
    <property type="molecule type" value="Genomic_DNA"/>
</dbReference>
<dbReference type="CARD" id="ARO:3003920">
    <property type="molecule name" value="pgpB"/>
    <property type="mechanism identifier" value="ARO:0001001"/>
    <property type="mechanism name" value="antibiotic target alteration"/>
</dbReference>
<dbReference type="KEGG" id="pgn:PGN_0524"/>
<dbReference type="eggNOG" id="COG0671">
    <property type="taxonomic scope" value="Bacteria"/>
</dbReference>
<dbReference type="HOGENOM" id="CLU_072573_10_0_10"/>
<dbReference type="UniPathway" id="UPA00973"/>
<dbReference type="Proteomes" id="UP000008842">
    <property type="component" value="Chromosome"/>
</dbReference>
<dbReference type="GO" id="GO:0005886">
    <property type="term" value="C:plasma membrane"/>
    <property type="evidence" value="ECO:0007669"/>
    <property type="project" value="UniProtKB-SubCell"/>
</dbReference>
<dbReference type="GO" id="GO:0016791">
    <property type="term" value="F:phosphatase activity"/>
    <property type="evidence" value="ECO:0000315"/>
    <property type="project" value="UniProtKB"/>
</dbReference>
<dbReference type="GO" id="GO:0009245">
    <property type="term" value="P:lipid A biosynthetic process"/>
    <property type="evidence" value="ECO:0000315"/>
    <property type="project" value="UniProtKB"/>
</dbReference>
<dbReference type="GO" id="GO:0009103">
    <property type="term" value="P:lipopolysaccharide biosynthetic process"/>
    <property type="evidence" value="ECO:0007669"/>
    <property type="project" value="UniProtKB-KW"/>
</dbReference>
<dbReference type="GO" id="GO:0046677">
    <property type="term" value="P:response to antibiotic"/>
    <property type="evidence" value="ECO:0007669"/>
    <property type="project" value="UniProtKB-KW"/>
</dbReference>
<dbReference type="GO" id="GO:0030682">
    <property type="term" value="P:symbiont-mediated perturbation of host defenses"/>
    <property type="evidence" value="ECO:0000315"/>
    <property type="project" value="UniProtKB"/>
</dbReference>
<dbReference type="CDD" id="cd03395">
    <property type="entry name" value="PAP2_like_4"/>
    <property type="match status" value="1"/>
</dbReference>
<dbReference type="Gene3D" id="1.20.144.10">
    <property type="entry name" value="Phosphatidic acid phosphatase type 2/haloperoxidase"/>
    <property type="match status" value="1"/>
</dbReference>
<dbReference type="InterPro" id="IPR036938">
    <property type="entry name" value="P_Acid_Pase_2/haloperoxi_sf"/>
</dbReference>
<dbReference type="InterPro" id="IPR000326">
    <property type="entry name" value="P_Acid_Pase_2/haloperoxidase"/>
</dbReference>
<dbReference type="PANTHER" id="PTHR14969:SF13">
    <property type="entry name" value="AT30094P"/>
    <property type="match status" value="1"/>
</dbReference>
<dbReference type="PANTHER" id="PTHR14969">
    <property type="entry name" value="SPHINGOSINE-1-PHOSPHATE PHOSPHOHYDROLASE"/>
    <property type="match status" value="1"/>
</dbReference>
<dbReference type="Pfam" id="PF01569">
    <property type="entry name" value="PAP2"/>
    <property type="match status" value="1"/>
</dbReference>
<dbReference type="SMART" id="SM00014">
    <property type="entry name" value="acidPPc"/>
    <property type="match status" value="1"/>
</dbReference>
<dbReference type="SUPFAM" id="SSF48317">
    <property type="entry name" value="Acid phosphatase/Vanadium-dependent haloperoxidase"/>
    <property type="match status" value="1"/>
</dbReference>
<name>LPXF_PORG3</name>
<keyword id="KW-0046">Antibiotic resistance</keyword>
<keyword id="KW-0997">Cell inner membrane</keyword>
<keyword id="KW-1003">Cell membrane</keyword>
<keyword id="KW-0378">Hydrolase</keyword>
<keyword id="KW-0441">Lipid A biosynthesis</keyword>
<keyword id="KW-0444">Lipid biosynthesis</keyword>
<keyword id="KW-0443">Lipid metabolism</keyword>
<keyword id="KW-0448">Lipopolysaccharide biosynthesis</keyword>
<keyword id="KW-0472">Membrane</keyword>
<keyword id="KW-0812">Transmembrane</keyword>
<keyword id="KW-1133">Transmembrane helix</keyword>
<keyword id="KW-0843">Virulence</keyword>
<proteinExistence type="inferred from homology"/>
<comment type="function">
    <text evidence="3 4">Removes the 4'-phosphate group from lipid A species. Absence of phosphate groups in lipid A renders the bacteria resistant to host-derived cationic antimicrobial peptides (CAMP) and allows it to camouflage itself from the host innate immune response (PubMed:19552698, PubMed:20657724). Removal of the 4'-phosphate may be required to generate the substrate for deacylation of the pentaacyl lipid A to the tetraccylated lipid A species (PubMed:19552698).</text>
</comment>
<comment type="pathway">
    <text evidence="7">Bacterial outer membrane biogenesis; LPS lipid A biosynthesis.</text>
</comment>
<comment type="subcellular location">
    <subcellularLocation>
        <location evidence="1">Cell inner membrane</location>
        <topology evidence="2">Multi-pass membrane protein</topology>
    </subcellularLocation>
</comment>
<comment type="disruption phenotype">
    <text evidence="3 4 5">No longer responds to changes in hemin, decreased removal of 4'-phosphate from lipid A species. Accumulates pentaacylated 4'-phosphate lipid A with concomitant loss of the usual non-phosphorylated tetraacylated lipid A. Lipopolysaccharide (LPS) or bacteria from this strain are a somewhat potent inducer of the human innate immune response via Toll-like receptor 4 (TLR4) in cultured HEK293 cells; double lpxE-lpxF mutants are more potent. Loss of resistance to the cationic antimicrobial peptide (CAMP) polymyxin B. Double lpxE-lpxF mutants accumulate multiple mono- and bi-phosphorylated lipid A species (PubMed:19552698, PubMed:20657724). Unable to colonize rabbit periodontium, a model for periodontal disease (PubMed:24478080).</text>
</comment>
<comment type="miscellaneous">
    <text evidence="3">When grown in low hemin conditions the major lipid A species are non-phosphorylated tetraacyl and 4'-phosphate pentaacyl lipid A, while under high hemin conditions the major lipid A species are non-phosphorylated tetraacyl and 1-phosphate tetraacyl lipid A (hemin is protoporphyrin IX containing Fe(3+) with a chloride ligand (CHEBI:50385) involved in the change from healthy to diseased gums).</text>
</comment>
<comment type="similarity">
    <text evidence="7">Belongs to the lipid A LpxF 4'-phosphatase family.</text>
</comment>
<evidence type="ECO:0000250" key="1">
    <source>
        <dbReference type="UniProtKB" id="A0Q4N6"/>
    </source>
</evidence>
<evidence type="ECO:0000255" key="2"/>
<evidence type="ECO:0000269" key="3">
    <source>
    </source>
</evidence>
<evidence type="ECO:0000269" key="4">
    <source>
    </source>
</evidence>
<evidence type="ECO:0000269" key="5">
    <source>
    </source>
</evidence>
<evidence type="ECO:0000303" key="6">
    <source>
    </source>
</evidence>
<evidence type="ECO:0000305" key="7"/>